<reference key="1">
    <citation type="submission" date="2004-04" db="EMBL/GenBank/DDBJ databases">
        <title>Characterization of metallothionein cDNA and transcriptional response to heavy metal exposures in a shark species, Scyliorhinus torazame.</title>
        <authorList>
            <person name="Nam Y.K."/>
            <person name="Kim D.S."/>
            <person name="Kim S.K."/>
            <person name="Kim K.H."/>
        </authorList>
    </citation>
    <scope>NUCLEOTIDE SEQUENCE [MRNA]</scope>
</reference>
<gene>
    <name type="primary">mt</name>
</gene>
<dbReference type="EMBL" id="AY605090">
    <property type="protein sequence ID" value="AAT35554.1"/>
    <property type="molecule type" value="mRNA"/>
</dbReference>
<dbReference type="GO" id="GO:0046872">
    <property type="term" value="F:metal ion binding"/>
    <property type="evidence" value="ECO:0007669"/>
    <property type="project" value="UniProtKB-KW"/>
</dbReference>
<dbReference type="Gene3D" id="4.10.10.10">
    <property type="entry name" value="Metallothionein Isoform II"/>
    <property type="match status" value="1"/>
</dbReference>
<dbReference type="InterPro" id="IPR017854">
    <property type="entry name" value="Metalthion_dom_sf"/>
</dbReference>
<dbReference type="InterPro" id="IPR023587">
    <property type="entry name" value="Metalthion_dom_sf_vert"/>
</dbReference>
<dbReference type="InterPro" id="IPR000006">
    <property type="entry name" value="Metalthion_vert"/>
</dbReference>
<dbReference type="Pfam" id="PF00131">
    <property type="entry name" value="Metallothio"/>
    <property type="match status" value="1"/>
</dbReference>
<dbReference type="SUPFAM" id="SSF57868">
    <property type="entry name" value="Metallothionein"/>
    <property type="match status" value="1"/>
</dbReference>
<protein>
    <recommendedName>
        <fullName>Metallothionein</fullName>
        <shortName>MT</shortName>
    </recommendedName>
</protein>
<evidence type="ECO:0000250" key="1"/>
<evidence type="ECO:0000250" key="2">
    <source>
        <dbReference type="UniProtKB" id="P02795"/>
    </source>
</evidence>
<evidence type="ECO:0000305" key="3"/>
<proteinExistence type="inferred from homology"/>
<organism>
    <name type="scientific">Scyliorhinus torazame</name>
    <name type="common">Cloudy catshark</name>
    <name type="synonym">Catulus torazame</name>
    <dbReference type="NCBI Taxonomy" id="75743"/>
    <lineage>
        <taxon>Eukaryota</taxon>
        <taxon>Metazoa</taxon>
        <taxon>Chordata</taxon>
        <taxon>Craniata</taxon>
        <taxon>Vertebrata</taxon>
        <taxon>Chondrichthyes</taxon>
        <taxon>Elasmobranchii</taxon>
        <taxon>Galeomorphii</taxon>
        <taxon>Galeoidea</taxon>
        <taxon>Carcharhiniformes</taxon>
        <taxon>Scyliorhinidae</taxon>
        <taxon>Scyliorhinus</taxon>
    </lineage>
</organism>
<name>MT_SCYTO</name>
<keyword id="KW-0479">Metal-binding</keyword>
<keyword id="KW-0480">Metal-thiolate cluster</keyword>
<feature type="chain" id="PRO_0000197319" description="Metallothionein">
    <location>
        <begin position="1"/>
        <end position="68"/>
    </location>
</feature>
<feature type="binding site" evidence="2">
    <location>
        <position position="7"/>
    </location>
    <ligand>
        <name>a divalent metal cation</name>
        <dbReference type="ChEBI" id="CHEBI:60240"/>
        <label>1</label>
        <note>in cluster B</note>
    </ligand>
</feature>
<feature type="binding site" evidence="2">
    <location>
        <position position="9"/>
    </location>
    <ligand>
        <name>a divalent metal cation</name>
        <dbReference type="ChEBI" id="CHEBI:60240"/>
        <label>1</label>
        <note>in cluster B</note>
    </ligand>
</feature>
<feature type="binding site" evidence="2">
    <location>
        <position position="9"/>
    </location>
    <ligand>
        <name>a divalent metal cation</name>
        <dbReference type="ChEBI" id="CHEBI:60240"/>
        <label>2</label>
        <note>in cluster B</note>
    </ligand>
</feature>
<feature type="binding site" evidence="2">
    <location>
        <position position="14"/>
    </location>
    <ligand>
        <name>a divalent metal cation</name>
        <dbReference type="ChEBI" id="CHEBI:60240"/>
        <label>2</label>
        <note>in cluster B</note>
    </ligand>
</feature>
<feature type="binding site" evidence="2">
    <location>
        <position position="16"/>
    </location>
    <ligand>
        <name>a divalent metal cation</name>
        <dbReference type="ChEBI" id="CHEBI:60240"/>
        <label>2</label>
        <note>in cluster B</note>
    </ligand>
</feature>
<feature type="binding site" evidence="2">
    <location>
        <position position="16"/>
    </location>
    <ligand>
        <name>a divalent metal cation</name>
        <dbReference type="ChEBI" id="CHEBI:60240"/>
        <label>3</label>
        <note>in cluster B</note>
    </ligand>
</feature>
<feature type="binding site" evidence="2">
    <location>
        <position position="20"/>
    </location>
    <ligand>
        <name>a divalent metal cation</name>
        <dbReference type="ChEBI" id="CHEBI:60240"/>
        <label>3</label>
        <note>in cluster B</note>
    </ligand>
</feature>
<feature type="binding site" evidence="2">
    <location>
        <position position="22"/>
    </location>
    <ligand>
        <name>a divalent metal cation</name>
        <dbReference type="ChEBI" id="CHEBI:60240"/>
        <label>1</label>
        <note>in cluster B</note>
    </ligand>
</feature>
<feature type="binding site" evidence="2">
    <location>
        <position position="25"/>
    </location>
    <ligand>
        <name>a divalent metal cation</name>
        <dbReference type="ChEBI" id="CHEBI:60240"/>
        <label>1</label>
        <note>in cluster B</note>
    </ligand>
</feature>
<feature type="binding site" evidence="2">
    <location>
        <position position="25"/>
    </location>
    <ligand>
        <name>a divalent metal cation</name>
        <dbReference type="ChEBI" id="CHEBI:60240"/>
        <label>3</label>
        <note>in cluster B</note>
    </ligand>
</feature>
<feature type="binding site" evidence="2">
    <location>
        <position position="27"/>
    </location>
    <ligand>
        <name>a divalent metal cation</name>
        <dbReference type="ChEBI" id="CHEBI:60240"/>
        <label>2</label>
        <note>in cluster B</note>
    </ligand>
</feature>
<feature type="binding site" evidence="2">
    <location>
        <position position="35"/>
    </location>
    <ligand>
        <name>a divalent metal cation</name>
        <dbReference type="ChEBI" id="CHEBI:60240"/>
        <label>3</label>
        <note>in cluster B</note>
    </ligand>
</feature>
<feature type="binding site" evidence="2">
    <location>
        <position position="39"/>
    </location>
    <ligand>
        <name>a divalent metal cation</name>
        <dbReference type="ChEBI" id="CHEBI:60240"/>
        <label>4</label>
        <note>in cluster A</note>
    </ligand>
</feature>
<feature type="binding site" evidence="2">
    <location>
        <position position="40"/>
    </location>
    <ligand>
        <name>a divalent metal cation</name>
        <dbReference type="ChEBI" id="CHEBI:60240"/>
        <label>4</label>
        <note>in cluster A</note>
    </ligand>
</feature>
<feature type="binding site" evidence="2">
    <location>
        <position position="40"/>
    </location>
    <ligand>
        <name>a divalent metal cation</name>
        <dbReference type="ChEBI" id="CHEBI:60240"/>
        <label>5</label>
        <note>in cluster A</note>
    </ligand>
</feature>
<feature type="binding site" evidence="2">
    <location>
        <position position="42"/>
    </location>
    <ligand>
        <name>a divalent metal cation</name>
        <dbReference type="ChEBI" id="CHEBI:60240"/>
        <label>5</label>
        <note>in cluster A</note>
    </ligand>
</feature>
<feature type="binding site" evidence="2">
    <location>
        <position position="43"/>
    </location>
    <ligand>
        <name>a divalent metal cation</name>
        <dbReference type="ChEBI" id="CHEBI:60240"/>
        <label>5</label>
        <note>in cluster A</note>
    </ligand>
</feature>
<feature type="binding site" evidence="2">
    <location>
        <position position="43"/>
    </location>
    <ligand>
        <name>a divalent metal cation</name>
        <dbReference type="ChEBI" id="CHEBI:60240"/>
        <label>6</label>
        <note>in cluster A</note>
    </ligand>
</feature>
<feature type="binding site" evidence="2">
    <location>
        <position position="47"/>
    </location>
    <ligand>
        <name>a divalent metal cation</name>
        <dbReference type="ChEBI" id="CHEBI:60240"/>
        <label>6</label>
        <note>in cluster A</note>
    </ligand>
</feature>
<feature type="binding site" evidence="2">
    <location>
        <position position="50"/>
    </location>
    <ligand>
        <name>a divalent metal cation</name>
        <dbReference type="ChEBI" id="CHEBI:60240"/>
        <label>4</label>
        <note>in cluster A</note>
    </ligand>
</feature>
<feature type="binding site" evidence="2">
    <location>
        <position position="50"/>
    </location>
    <ligand>
        <name>a divalent metal cation</name>
        <dbReference type="ChEBI" id="CHEBI:60240"/>
        <label>6</label>
        <note>in cluster A</note>
    </ligand>
</feature>
<feature type="binding site" evidence="2">
    <location>
        <position position="54"/>
    </location>
    <ligand>
        <name>a divalent metal cation</name>
        <dbReference type="ChEBI" id="CHEBI:60240"/>
        <label>4</label>
        <note>in cluster A</note>
    </ligand>
</feature>
<feature type="binding site" evidence="2">
    <location>
        <position position="56"/>
    </location>
    <ligand>
        <name>a divalent metal cation</name>
        <dbReference type="ChEBI" id="CHEBI:60240"/>
        <label>5</label>
        <note>in cluster A</note>
    </ligand>
</feature>
<feature type="binding site" evidence="2">
    <location>
        <position position="56"/>
    </location>
    <ligand>
        <name>a divalent metal cation</name>
        <dbReference type="ChEBI" id="CHEBI:60240"/>
        <label>7</label>
        <note>in cluster A</note>
    </ligand>
</feature>
<feature type="binding site" evidence="2">
    <location>
        <position position="64"/>
    </location>
    <ligand>
        <name>a divalent metal cation</name>
        <dbReference type="ChEBI" id="CHEBI:60240"/>
        <label>7</label>
        <note>in cluster A</note>
    </ligand>
</feature>
<feature type="binding site" evidence="2">
    <location>
        <position position="66"/>
    </location>
    <ligand>
        <name>a divalent metal cation</name>
        <dbReference type="ChEBI" id="CHEBI:60240"/>
        <label>7</label>
        <note>in cluster A</note>
    </ligand>
</feature>
<feature type="binding site" evidence="2">
    <location>
        <position position="67"/>
    </location>
    <ligand>
        <name>a divalent metal cation</name>
        <dbReference type="ChEBI" id="CHEBI:60240"/>
        <label>6</label>
        <note>in cluster A</note>
    </ligand>
</feature>
<feature type="binding site" evidence="2">
    <location>
        <position position="67"/>
    </location>
    <ligand>
        <name>a divalent metal cation</name>
        <dbReference type="ChEBI" id="CHEBI:60240"/>
        <label>7</label>
        <note>in cluster A</note>
    </ligand>
</feature>
<sequence>MSDTKPCVCLDGSCSCENTCRCSDCRCPTSKAGRCQKSCCSCCPAGCTNCANGCVCKGKASDKCSCCS</sequence>
<accession>Q6J1T3</accession>
<comment type="function">
    <text evidence="1">Metallothioneins have a high content of cysteine residues that bind various heavy metals.</text>
</comment>
<comment type="domain">
    <text>Class I metallothioneins contain 2 metal-binding domains: four divalent ions are chelated within cluster A of the alpha domain and are coordinated via cysteinyl thiolate bridges to 11 cysteine ligands. Cluster B, the corresponding region within the beta domain, can ligate three divalent ions to 9 cysteines.</text>
</comment>
<comment type="similarity">
    <text evidence="3">Belongs to the metallothionein superfamily. Type 1 family.</text>
</comment>